<comment type="function">
    <text>May be involved in transcription termination by RNA polymerase III. Binds RNA and DNA. Binds to the 3' end of the minus strand of Sindbis virus RNA. This may be significant for Sindbis virus RNA replication.</text>
</comment>
<comment type="subcellular location">
    <subcellularLocation>
        <location>Nucleus</location>
    </subcellularLocation>
    <subcellularLocation>
        <location>Cytoplasm</location>
    </subcellularLocation>
    <text>Primarily nuclear, but significant amounts are present in the cytoplasm.</text>
</comment>
<evidence type="ECO:0000255" key="1">
    <source>
        <dbReference type="PROSITE-ProRule" id="PRU00176"/>
    </source>
</evidence>
<evidence type="ECO:0000255" key="2">
    <source>
        <dbReference type="PROSITE-ProRule" id="PRU00332"/>
    </source>
</evidence>
<evidence type="ECO:0000255" key="3">
    <source>
        <dbReference type="PROSITE-ProRule" id="PRU01288"/>
    </source>
</evidence>
<evidence type="ECO:0000256" key="4">
    <source>
        <dbReference type="SAM" id="MobiDB-lite"/>
    </source>
</evidence>
<proteinExistence type="evidence at protein level"/>
<name>LA_AEDAL</name>
<sequence>MTEVEAKATATEETTKEEEEAPETTAEQTEESAQETSENVSKLEASTIRQLEYYFGDANLARDKFLQEQISKDEGWVPVDVLLTFKRLKSLSEDKKVIVDAIEKSDEGLIEVSEDREKLRRHPERPLPEQNEETRKEIYGRTVYVKGFAPEEGTQMSELLEFFEPFEKITNIVMRKYHDKATKKYLFKGSVFVTFATKDHCAEFLKKEKLGYKGKELIRKMQDDYFEEKKAERRKKDKKKEEDRFNIDHLPKGASVHLSGFNKDTSRETIKETILKLDESLEVAFIDYAKTDTEGTVRFAADDAGKKFMEKLTDSKIQIDEEEITARLLEGDEEKEFLRKVVKDQQARRQASNARNKGRTPEGRQASRPPQEWRRKAKGGRGE</sequence>
<keyword id="KW-0963">Cytoplasm</keyword>
<keyword id="KW-0903">Direct protein sequencing</keyword>
<keyword id="KW-0238">DNA-binding</keyword>
<keyword id="KW-0539">Nucleus</keyword>
<keyword id="KW-0694">RNA-binding</keyword>
<dbReference type="EMBL" id="S80954">
    <property type="protein sequence ID" value="AAB35931.1"/>
    <property type="molecule type" value="mRNA"/>
</dbReference>
<dbReference type="SMR" id="Q26457"/>
<dbReference type="VEuPathDB" id="VectorBase:AALC636_034625"/>
<dbReference type="VEuPathDB" id="VectorBase:AALF018320"/>
<dbReference type="VEuPathDB" id="VectorBase:AALFPA_080594"/>
<dbReference type="Proteomes" id="UP000069940">
    <property type="component" value="Unassembled WGS sequence"/>
</dbReference>
<dbReference type="GO" id="GO:0010494">
    <property type="term" value="C:cytoplasmic stress granule"/>
    <property type="evidence" value="ECO:0007669"/>
    <property type="project" value="TreeGrafter"/>
</dbReference>
<dbReference type="GO" id="GO:0005829">
    <property type="term" value="C:cytosol"/>
    <property type="evidence" value="ECO:0007669"/>
    <property type="project" value="TreeGrafter"/>
</dbReference>
<dbReference type="GO" id="GO:0005634">
    <property type="term" value="C:nucleus"/>
    <property type="evidence" value="ECO:0007669"/>
    <property type="project" value="UniProtKB-SubCell"/>
</dbReference>
<dbReference type="GO" id="GO:1990904">
    <property type="term" value="C:ribonucleoprotein complex"/>
    <property type="evidence" value="ECO:0007669"/>
    <property type="project" value="InterPro"/>
</dbReference>
<dbReference type="GO" id="GO:0003677">
    <property type="term" value="F:DNA binding"/>
    <property type="evidence" value="ECO:0007669"/>
    <property type="project" value="UniProtKB-KW"/>
</dbReference>
<dbReference type="GO" id="GO:0003729">
    <property type="term" value="F:mRNA binding"/>
    <property type="evidence" value="ECO:0007669"/>
    <property type="project" value="TreeGrafter"/>
</dbReference>
<dbReference type="GO" id="GO:0045727">
    <property type="term" value="P:positive regulation of translation"/>
    <property type="evidence" value="ECO:0007669"/>
    <property type="project" value="TreeGrafter"/>
</dbReference>
<dbReference type="GO" id="GO:0008033">
    <property type="term" value="P:tRNA processing"/>
    <property type="evidence" value="ECO:0007669"/>
    <property type="project" value="TreeGrafter"/>
</dbReference>
<dbReference type="CDD" id="cd08028">
    <property type="entry name" value="LARP_3"/>
    <property type="match status" value="1"/>
</dbReference>
<dbReference type="CDD" id="cd12291">
    <property type="entry name" value="RRM1_La"/>
    <property type="match status" value="1"/>
</dbReference>
<dbReference type="CDD" id="cd12541">
    <property type="entry name" value="RRM2_La"/>
    <property type="match status" value="1"/>
</dbReference>
<dbReference type="Gene3D" id="3.30.70.330">
    <property type="match status" value="2"/>
</dbReference>
<dbReference type="Gene3D" id="1.10.10.10">
    <property type="entry name" value="Winged helix-like DNA-binding domain superfamily/Winged helix DNA-binding domain"/>
    <property type="match status" value="1"/>
</dbReference>
<dbReference type="InterPro" id="IPR045180">
    <property type="entry name" value="La_dom_prot"/>
</dbReference>
<dbReference type="InterPro" id="IPR006630">
    <property type="entry name" value="La_HTH"/>
</dbReference>
<dbReference type="InterPro" id="IPR014886">
    <property type="entry name" value="La_xRRM"/>
</dbReference>
<dbReference type="InterPro" id="IPR002344">
    <property type="entry name" value="Lupus_La"/>
</dbReference>
<dbReference type="InterPro" id="IPR012677">
    <property type="entry name" value="Nucleotide-bd_a/b_plait_sf"/>
</dbReference>
<dbReference type="InterPro" id="IPR035979">
    <property type="entry name" value="RBD_domain_sf"/>
</dbReference>
<dbReference type="InterPro" id="IPR000504">
    <property type="entry name" value="RRM_dom"/>
</dbReference>
<dbReference type="InterPro" id="IPR036388">
    <property type="entry name" value="WH-like_DNA-bd_sf"/>
</dbReference>
<dbReference type="InterPro" id="IPR036390">
    <property type="entry name" value="WH_DNA-bd_sf"/>
</dbReference>
<dbReference type="PANTHER" id="PTHR22792:SF166">
    <property type="entry name" value="LUPUS LA PROTEIN HOMOLOG"/>
    <property type="match status" value="1"/>
</dbReference>
<dbReference type="PANTHER" id="PTHR22792">
    <property type="entry name" value="LUPUS LA PROTEIN-RELATED"/>
    <property type="match status" value="1"/>
</dbReference>
<dbReference type="Pfam" id="PF05383">
    <property type="entry name" value="La"/>
    <property type="match status" value="1"/>
</dbReference>
<dbReference type="Pfam" id="PF08777">
    <property type="entry name" value="RRM_3"/>
    <property type="match status" value="1"/>
</dbReference>
<dbReference type="PRINTS" id="PR00302">
    <property type="entry name" value="LUPUSLA"/>
</dbReference>
<dbReference type="SMART" id="SM00715">
    <property type="entry name" value="LA"/>
    <property type="match status" value="1"/>
</dbReference>
<dbReference type="SMART" id="SM00360">
    <property type="entry name" value="RRM"/>
    <property type="match status" value="1"/>
</dbReference>
<dbReference type="SUPFAM" id="SSF54928">
    <property type="entry name" value="RNA-binding domain, RBD"/>
    <property type="match status" value="2"/>
</dbReference>
<dbReference type="SUPFAM" id="SSF46785">
    <property type="entry name" value="Winged helix' DNA-binding domain"/>
    <property type="match status" value="1"/>
</dbReference>
<dbReference type="PROSITE" id="PS50961">
    <property type="entry name" value="HTH_LA"/>
    <property type="match status" value="1"/>
</dbReference>
<dbReference type="PROSITE" id="PS50102">
    <property type="entry name" value="RRM"/>
    <property type="match status" value="1"/>
</dbReference>
<dbReference type="PROSITE" id="PS51939">
    <property type="entry name" value="XRRM"/>
    <property type="match status" value="1"/>
</dbReference>
<feature type="chain" id="PRO_0000207605" description="La protein homolog">
    <location>
        <begin position="1"/>
        <end position="383"/>
    </location>
</feature>
<feature type="domain" description="HTH La-type RNA-binding" evidence="2">
    <location>
        <begin position="37"/>
        <end position="129"/>
    </location>
</feature>
<feature type="domain" description="RRM" evidence="1">
    <location>
        <begin position="141"/>
        <end position="228"/>
    </location>
</feature>
<feature type="domain" description="xRRM" evidence="3">
    <location>
        <begin position="249"/>
        <end position="368"/>
    </location>
</feature>
<feature type="region of interest" description="Disordered" evidence="4">
    <location>
        <begin position="1"/>
        <end position="43"/>
    </location>
</feature>
<feature type="region of interest" description="Disordered" evidence="4">
    <location>
        <begin position="343"/>
        <end position="383"/>
    </location>
</feature>
<feature type="compositionally biased region" description="Acidic residues" evidence="4">
    <location>
        <begin position="15"/>
        <end position="33"/>
    </location>
</feature>
<accession>Q26457</accession>
<reference key="1">
    <citation type="journal article" date="1996" name="J. Virol.">
        <title>Mosquito homolog of the La autoantigen binds to Sindbis virus RNA.</title>
        <authorList>
            <person name="Pardigon N."/>
            <person name="Strauss J.H."/>
        </authorList>
    </citation>
    <scope>NUCLEOTIDE SEQUENCE [MRNA]</scope>
    <scope>PARTIAL PROTEIN SEQUENCE</scope>
</reference>
<protein>
    <recommendedName>
        <fullName>La protein homolog</fullName>
    </recommendedName>
    <alternativeName>
        <fullName>La autoantigen homolog</fullName>
    </alternativeName>
    <alternativeName>
        <fullName>La ribonucleoprotein</fullName>
    </alternativeName>
</protein>
<organism>
    <name type="scientific">Aedes albopictus</name>
    <name type="common">Asian tiger mosquito</name>
    <name type="synonym">Stegomyia albopicta</name>
    <dbReference type="NCBI Taxonomy" id="7160"/>
    <lineage>
        <taxon>Eukaryota</taxon>
        <taxon>Metazoa</taxon>
        <taxon>Ecdysozoa</taxon>
        <taxon>Arthropoda</taxon>
        <taxon>Hexapoda</taxon>
        <taxon>Insecta</taxon>
        <taxon>Pterygota</taxon>
        <taxon>Neoptera</taxon>
        <taxon>Endopterygota</taxon>
        <taxon>Diptera</taxon>
        <taxon>Nematocera</taxon>
        <taxon>Culicoidea</taxon>
        <taxon>Culicidae</taxon>
        <taxon>Culicinae</taxon>
        <taxon>Aedini</taxon>
        <taxon>Aedes</taxon>
        <taxon>Stegomyia</taxon>
    </lineage>
</organism>